<dbReference type="EC" id="3.1.2.6" evidence="1"/>
<dbReference type="EMBL" id="AE017126">
    <property type="protein sequence ID" value="AAP99606.1"/>
    <property type="molecule type" value="Genomic_DNA"/>
</dbReference>
<dbReference type="RefSeq" id="NP_874954.1">
    <property type="nucleotide sequence ID" value="NC_005042.1"/>
</dbReference>
<dbReference type="RefSeq" id="WP_011124714.1">
    <property type="nucleotide sequence ID" value="NC_005042.1"/>
</dbReference>
<dbReference type="SMR" id="Q7VD23"/>
<dbReference type="STRING" id="167539.Pro_0561"/>
<dbReference type="EnsemblBacteria" id="AAP99606">
    <property type="protein sequence ID" value="AAP99606"/>
    <property type="gene ID" value="Pro_0561"/>
</dbReference>
<dbReference type="KEGG" id="pma:Pro_0561"/>
<dbReference type="PATRIC" id="fig|167539.5.peg.576"/>
<dbReference type="eggNOG" id="COG0491">
    <property type="taxonomic scope" value="Bacteria"/>
</dbReference>
<dbReference type="HOGENOM" id="CLU_030571_4_1_3"/>
<dbReference type="OrthoDB" id="9802897at2"/>
<dbReference type="UniPathway" id="UPA00619">
    <property type="reaction ID" value="UER00676"/>
</dbReference>
<dbReference type="Proteomes" id="UP000001420">
    <property type="component" value="Chromosome"/>
</dbReference>
<dbReference type="GO" id="GO:0004416">
    <property type="term" value="F:hydroxyacylglutathione hydrolase activity"/>
    <property type="evidence" value="ECO:0007669"/>
    <property type="project" value="UniProtKB-UniRule"/>
</dbReference>
<dbReference type="GO" id="GO:0046872">
    <property type="term" value="F:metal ion binding"/>
    <property type="evidence" value="ECO:0007669"/>
    <property type="project" value="UniProtKB-KW"/>
</dbReference>
<dbReference type="GO" id="GO:0019243">
    <property type="term" value="P:methylglyoxal catabolic process to D-lactate via S-lactoyl-glutathione"/>
    <property type="evidence" value="ECO:0007669"/>
    <property type="project" value="InterPro"/>
</dbReference>
<dbReference type="CDD" id="cd07723">
    <property type="entry name" value="hydroxyacylglutathione_hydrolase_MBL-fold"/>
    <property type="match status" value="1"/>
</dbReference>
<dbReference type="Gene3D" id="3.60.15.10">
    <property type="entry name" value="Ribonuclease Z/Hydroxyacylglutathione hydrolase-like"/>
    <property type="match status" value="1"/>
</dbReference>
<dbReference type="HAMAP" id="MF_01374">
    <property type="entry name" value="Glyoxalase_2"/>
    <property type="match status" value="1"/>
</dbReference>
<dbReference type="InterPro" id="IPR035680">
    <property type="entry name" value="Clx_II_MBL"/>
</dbReference>
<dbReference type="InterPro" id="IPR050110">
    <property type="entry name" value="Glyoxalase_II_hydrolase"/>
</dbReference>
<dbReference type="InterPro" id="IPR032282">
    <property type="entry name" value="HAGH_C"/>
</dbReference>
<dbReference type="InterPro" id="IPR017782">
    <property type="entry name" value="Hydroxyacylglutathione_Hdrlase"/>
</dbReference>
<dbReference type="InterPro" id="IPR001279">
    <property type="entry name" value="Metallo-B-lactamas"/>
</dbReference>
<dbReference type="InterPro" id="IPR036866">
    <property type="entry name" value="RibonucZ/Hydroxyglut_hydro"/>
</dbReference>
<dbReference type="NCBIfam" id="TIGR03413">
    <property type="entry name" value="GSH_gloB"/>
    <property type="match status" value="1"/>
</dbReference>
<dbReference type="PANTHER" id="PTHR43705">
    <property type="entry name" value="HYDROXYACYLGLUTATHIONE HYDROLASE"/>
    <property type="match status" value="1"/>
</dbReference>
<dbReference type="PANTHER" id="PTHR43705:SF1">
    <property type="entry name" value="HYDROXYACYLGLUTATHIONE HYDROLASE GLOB"/>
    <property type="match status" value="1"/>
</dbReference>
<dbReference type="Pfam" id="PF16123">
    <property type="entry name" value="HAGH_C"/>
    <property type="match status" value="1"/>
</dbReference>
<dbReference type="Pfam" id="PF00753">
    <property type="entry name" value="Lactamase_B"/>
    <property type="match status" value="1"/>
</dbReference>
<dbReference type="PIRSF" id="PIRSF005457">
    <property type="entry name" value="Glx"/>
    <property type="match status" value="1"/>
</dbReference>
<dbReference type="SMART" id="SM00849">
    <property type="entry name" value="Lactamase_B"/>
    <property type="match status" value="1"/>
</dbReference>
<dbReference type="SUPFAM" id="SSF56281">
    <property type="entry name" value="Metallo-hydrolase/oxidoreductase"/>
    <property type="match status" value="1"/>
</dbReference>
<proteinExistence type="inferred from homology"/>
<evidence type="ECO:0000255" key="1">
    <source>
        <dbReference type="HAMAP-Rule" id="MF_01374"/>
    </source>
</evidence>
<comment type="function">
    <text evidence="1">Thiolesterase that catalyzes the hydrolysis of S-D-lactoyl-glutathione to form glutathione and D-lactic acid.</text>
</comment>
<comment type="catalytic activity">
    <reaction evidence="1">
        <text>an S-(2-hydroxyacyl)glutathione + H2O = a 2-hydroxy carboxylate + glutathione + H(+)</text>
        <dbReference type="Rhea" id="RHEA:21864"/>
        <dbReference type="ChEBI" id="CHEBI:15377"/>
        <dbReference type="ChEBI" id="CHEBI:15378"/>
        <dbReference type="ChEBI" id="CHEBI:57925"/>
        <dbReference type="ChEBI" id="CHEBI:58896"/>
        <dbReference type="ChEBI" id="CHEBI:71261"/>
        <dbReference type="EC" id="3.1.2.6"/>
    </reaction>
</comment>
<comment type="cofactor">
    <cofactor evidence="1">
        <name>Zn(2+)</name>
        <dbReference type="ChEBI" id="CHEBI:29105"/>
    </cofactor>
    <text evidence="1">Binds 2 Zn(2+) ions per subunit.</text>
</comment>
<comment type="pathway">
    <text evidence="1">Secondary metabolite metabolism; methylglyoxal degradation; (R)-lactate from methylglyoxal: step 2/2.</text>
</comment>
<comment type="subunit">
    <text evidence="1">Monomer.</text>
</comment>
<comment type="similarity">
    <text evidence="1">Belongs to the metallo-beta-lactamase superfamily. Glyoxalase II family.</text>
</comment>
<organism>
    <name type="scientific">Prochlorococcus marinus (strain SARG / CCMP1375 / SS120)</name>
    <dbReference type="NCBI Taxonomy" id="167539"/>
    <lineage>
        <taxon>Bacteria</taxon>
        <taxon>Bacillati</taxon>
        <taxon>Cyanobacteriota</taxon>
        <taxon>Cyanophyceae</taxon>
        <taxon>Synechococcales</taxon>
        <taxon>Prochlorococcaceae</taxon>
        <taxon>Prochlorococcus</taxon>
    </lineage>
</organism>
<keyword id="KW-0378">Hydrolase</keyword>
<keyword id="KW-0479">Metal-binding</keyword>
<keyword id="KW-1185">Reference proteome</keyword>
<keyword id="KW-0862">Zinc</keyword>
<accession>Q7VD23</accession>
<gene>
    <name evidence="1" type="primary">gloB</name>
    <name type="ordered locus">Pro_0561</name>
</gene>
<reference key="1">
    <citation type="journal article" date="2003" name="Proc. Natl. Acad. Sci. U.S.A.">
        <title>Genome sequence of the cyanobacterium Prochlorococcus marinus SS120, a nearly minimal oxyphototrophic genome.</title>
        <authorList>
            <person name="Dufresne A."/>
            <person name="Salanoubat M."/>
            <person name="Partensky F."/>
            <person name="Artiguenave F."/>
            <person name="Axmann I.M."/>
            <person name="Barbe V."/>
            <person name="Duprat S."/>
            <person name="Galperin M.Y."/>
            <person name="Koonin E.V."/>
            <person name="Le Gall F."/>
            <person name="Makarova K.S."/>
            <person name="Ostrowski M."/>
            <person name="Oztas S."/>
            <person name="Robert C."/>
            <person name="Rogozin I.B."/>
            <person name="Scanlan D.J."/>
            <person name="Tandeau de Marsac N."/>
            <person name="Weissenbach J."/>
            <person name="Wincker P."/>
            <person name="Wolf Y.I."/>
            <person name="Hess W.R."/>
        </authorList>
    </citation>
    <scope>NUCLEOTIDE SEQUENCE [LARGE SCALE GENOMIC DNA]</scope>
    <source>
        <strain>SARG / CCMP1375 / SS120</strain>
    </source>
</reference>
<feature type="chain" id="PRO_0000309675" description="Hydroxyacylglutathione hydrolase">
    <location>
        <begin position="1"/>
        <end position="253"/>
    </location>
</feature>
<feature type="binding site" evidence="1">
    <location>
        <position position="59"/>
    </location>
    <ligand>
        <name>Zn(2+)</name>
        <dbReference type="ChEBI" id="CHEBI:29105"/>
        <label>1</label>
    </ligand>
</feature>
<feature type="binding site" evidence="1">
    <location>
        <position position="61"/>
    </location>
    <ligand>
        <name>Zn(2+)</name>
        <dbReference type="ChEBI" id="CHEBI:29105"/>
        <label>1</label>
    </ligand>
</feature>
<feature type="binding site" evidence="1">
    <location>
        <position position="63"/>
    </location>
    <ligand>
        <name>Zn(2+)</name>
        <dbReference type="ChEBI" id="CHEBI:29105"/>
        <label>2</label>
    </ligand>
</feature>
<feature type="binding site" evidence="1">
    <location>
        <position position="64"/>
    </location>
    <ligand>
        <name>Zn(2+)</name>
        <dbReference type="ChEBI" id="CHEBI:29105"/>
        <label>2</label>
    </ligand>
</feature>
<feature type="binding site" evidence="1">
    <location>
        <position position="118"/>
    </location>
    <ligand>
        <name>Zn(2+)</name>
        <dbReference type="ChEBI" id="CHEBI:29105"/>
        <label>1</label>
    </ligand>
</feature>
<feature type="binding site" evidence="1">
    <location>
        <position position="143"/>
    </location>
    <ligand>
        <name>Zn(2+)</name>
        <dbReference type="ChEBI" id="CHEBI:29105"/>
        <label>1</label>
    </ligand>
</feature>
<feature type="binding site" evidence="1">
    <location>
        <position position="143"/>
    </location>
    <ligand>
        <name>Zn(2+)</name>
        <dbReference type="ChEBI" id="CHEBI:29105"/>
        <label>2</label>
    </ligand>
</feature>
<feature type="binding site" evidence="1">
    <location>
        <position position="181"/>
    </location>
    <ligand>
        <name>Zn(2+)</name>
        <dbReference type="ChEBI" id="CHEBI:29105"/>
        <label>2</label>
    </ligand>
</feature>
<name>GLO2_PROMA</name>
<sequence>MKKKEEGFIIHPIPVLMDNIIWIWVKEKQAIVVDPAISEPVINLLKGNGLSLHSVLQTHHHEDHIGGTQELINVWPSASVIAAKSDLDRIQFQTKSVVDNEELDILGQKIKVIEVPGHTSNHICFFLQGSKESKIDPVLFCGDTLFGAGCGRLFEGTPEQMFNSLSRINNLPKNTKIYCAHEYTEANLRWAKSIFPEDIYIEERLKEVILRKSKGFLSIPSKLSEERKTNLFIRASNQREFAQLRLHKDNWKS</sequence>
<protein>
    <recommendedName>
        <fullName evidence="1">Hydroxyacylglutathione hydrolase</fullName>
        <ecNumber evidence="1">3.1.2.6</ecNumber>
    </recommendedName>
    <alternativeName>
        <fullName evidence="1">Glyoxalase II</fullName>
        <shortName evidence="1">Glx II</shortName>
    </alternativeName>
</protein>